<protein>
    <recommendedName>
        <fullName>Small integral membrane protein 3</fullName>
    </recommendedName>
    <alternativeName>
        <fullName>NGF-induced differentiation clone 67 protein</fullName>
    </alternativeName>
    <alternativeName>
        <fullName>Small membrane protein NID67</fullName>
    </alternativeName>
</protein>
<sequence>MDAISQSPVDVLLPKHILDIWAIVLIILATVVIMTSLFLCPATAVIIYRMRTHPVLNGAV</sequence>
<proteinExistence type="evidence at protein level"/>
<gene>
    <name type="primary">Smim3</name>
    <name type="synonym">Nid67</name>
</gene>
<name>SMIM3_RAT</name>
<reference key="1">
    <citation type="journal article" date="2001" name="J. Neurosci. Res.">
        <title>NID67, a small putative membrane protein, is preferentially induced by NGF in PC12 pheochromocytoma cells.</title>
        <authorList>
            <person name="Vician L."/>
            <person name="Silver A.L."/>
            <person name="Farias-Eisner R."/>
            <person name="Herschman H.R."/>
        </authorList>
    </citation>
    <scope>NUCLEOTIDE SEQUENCE [MRNA]</scope>
</reference>
<reference key="2">
    <citation type="journal article" date="2004" name="Genome Res.">
        <title>The status, quality, and expansion of the NIH full-length cDNA project: the Mammalian Gene Collection (MGC).</title>
        <authorList>
            <consortium name="The MGC Project Team"/>
        </authorList>
    </citation>
    <scope>NUCLEOTIDE SEQUENCE [LARGE SCALE MRNA]</scope>
    <source>
        <tissue>Lung</tissue>
    </source>
</reference>
<reference key="3">
    <citation type="journal article" date="2015" name="J. Proteome Res.">
        <title>Peptidomics for studying limited proteolysis.</title>
        <authorList>
            <person name="Tsuchiya T."/>
            <person name="Osaki T."/>
            <person name="Minamino N."/>
            <person name="Sasaki K."/>
        </authorList>
    </citation>
    <scope>CLEAVAGE AFTER ASP-19</scope>
    <scope>IDENTIFICATION BY MASS SPECTROMETRY</scope>
</reference>
<evidence type="ECO:0000255" key="1"/>
<evidence type="ECO:0000269" key="2">
    <source>
    </source>
</evidence>
<evidence type="ECO:0000305" key="3"/>
<dbReference type="EMBL" id="AF313411">
    <property type="protein sequence ID" value="AAG53957.1"/>
    <property type="molecule type" value="mRNA"/>
</dbReference>
<dbReference type="EMBL" id="BC070515">
    <property type="protein sequence ID" value="AAH70515.1"/>
    <property type="molecule type" value="mRNA"/>
</dbReference>
<dbReference type="RefSeq" id="NP_775149.1">
    <property type="nucleotide sequence ID" value="NM_173126.3"/>
</dbReference>
<dbReference type="RefSeq" id="XP_006254831.1">
    <property type="nucleotide sequence ID" value="XM_006254769.4"/>
</dbReference>
<dbReference type="RefSeq" id="XP_017456352.1">
    <property type="nucleotide sequence ID" value="XM_017600863.3"/>
</dbReference>
<dbReference type="RefSeq" id="XP_017456353.1">
    <property type="nucleotide sequence ID" value="XM_017600864.3"/>
</dbReference>
<dbReference type="RefSeq" id="XP_038952541.1">
    <property type="nucleotide sequence ID" value="XM_039096613.2"/>
</dbReference>
<dbReference type="RefSeq" id="XP_038952542.1">
    <property type="nucleotide sequence ID" value="XM_039096614.2"/>
</dbReference>
<dbReference type="RefSeq" id="XP_063133223.1">
    <property type="nucleotide sequence ID" value="XM_063277153.1"/>
</dbReference>
<dbReference type="SMR" id="Q99PE6"/>
<dbReference type="FunCoup" id="Q99PE6">
    <property type="interactions" value="25"/>
</dbReference>
<dbReference type="STRING" id="10116.ENSRNOP00000026426"/>
<dbReference type="PaxDb" id="10116-ENSRNOP00000026426"/>
<dbReference type="Ensembl" id="ENSRNOT00000026426.6">
    <property type="protein sequence ID" value="ENSRNOP00000026426.3"/>
    <property type="gene ID" value="ENSRNOG00000019536.6"/>
</dbReference>
<dbReference type="GeneID" id="286910"/>
<dbReference type="KEGG" id="rno:286910"/>
<dbReference type="UCSC" id="RGD:628864">
    <property type="organism name" value="rat"/>
</dbReference>
<dbReference type="AGR" id="RGD:628864"/>
<dbReference type="CTD" id="85027"/>
<dbReference type="RGD" id="628864">
    <property type="gene designation" value="Smim3"/>
</dbReference>
<dbReference type="eggNOG" id="ENOG502SGSH">
    <property type="taxonomic scope" value="Eukaryota"/>
</dbReference>
<dbReference type="GeneTree" id="ENSGT00390000009443"/>
<dbReference type="HOGENOM" id="CLU_2941125_0_0_1"/>
<dbReference type="InParanoid" id="Q99PE6"/>
<dbReference type="PhylomeDB" id="Q99PE6"/>
<dbReference type="TreeFam" id="TF354124"/>
<dbReference type="PRO" id="PR:Q99PE6"/>
<dbReference type="Proteomes" id="UP000002494">
    <property type="component" value="Chromosome 18"/>
</dbReference>
<dbReference type="Bgee" id="ENSRNOG00000019536">
    <property type="expression patterns" value="Expressed in heart and 19 other cell types or tissues"/>
</dbReference>
<dbReference type="GO" id="GO:0016020">
    <property type="term" value="C:membrane"/>
    <property type="evidence" value="ECO:0007669"/>
    <property type="project" value="UniProtKB-SubCell"/>
</dbReference>
<dbReference type="GO" id="GO:0042802">
    <property type="term" value="F:identical protein binding"/>
    <property type="evidence" value="ECO:0000266"/>
    <property type="project" value="RGD"/>
</dbReference>
<dbReference type="GO" id="GO:0007399">
    <property type="term" value="P:nervous system development"/>
    <property type="evidence" value="ECO:0000303"/>
    <property type="project" value="RGD"/>
</dbReference>
<dbReference type="InterPro" id="IPR035275">
    <property type="entry name" value="Smim3"/>
</dbReference>
<dbReference type="PANTHER" id="PTHR37859">
    <property type="entry name" value="SMALL INTEGRAL MEMBRANE PROTEIN 3"/>
    <property type="match status" value="1"/>
</dbReference>
<dbReference type="PANTHER" id="PTHR37859:SF1">
    <property type="entry name" value="SMALL INTEGRAL MEMBRANE PROTEIN 3"/>
    <property type="match status" value="1"/>
</dbReference>
<dbReference type="Pfam" id="PF17307">
    <property type="entry name" value="Smim3"/>
    <property type="match status" value="1"/>
</dbReference>
<feature type="chain" id="PRO_0000096818" description="Small integral membrane protein 3">
    <location>
        <begin position="1"/>
        <end position="60"/>
    </location>
</feature>
<feature type="transmembrane region" description="Helical" evidence="1">
    <location>
        <begin position="20"/>
        <end position="40"/>
    </location>
</feature>
<feature type="site" description="Cleavage" evidence="2">
    <location>
        <begin position="19"/>
        <end position="20"/>
    </location>
</feature>
<keyword id="KW-0472">Membrane</keyword>
<keyword id="KW-1185">Reference proteome</keyword>
<keyword id="KW-0812">Transmembrane</keyword>
<keyword id="KW-1133">Transmembrane helix</keyword>
<organism>
    <name type="scientific">Rattus norvegicus</name>
    <name type="common">Rat</name>
    <dbReference type="NCBI Taxonomy" id="10116"/>
    <lineage>
        <taxon>Eukaryota</taxon>
        <taxon>Metazoa</taxon>
        <taxon>Chordata</taxon>
        <taxon>Craniata</taxon>
        <taxon>Vertebrata</taxon>
        <taxon>Euteleostomi</taxon>
        <taxon>Mammalia</taxon>
        <taxon>Eutheria</taxon>
        <taxon>Euarchontoglires</taxon>
        <taxon>Glires</taxon>
        <taxon>Rodentia</taxon>
        <taxon>Myomorpha</taxon>
        <taxon>Muroidea</taxon>
        <taxon>Muridae</taxon>
        <taxon>Murinae</taxon>
        <taxon>Rattus</taxon>
    </lineage>
</organism>
<accession>Q99PE6</accession>
<comment type="subcellular location">
    <subcellularLocation>
        <location evidence="3">Membrane</location>
        <topology evidence="3">Single-pass membrane protein</topology>
    </subcellularLocation>
</comment>